<protein>
    <recommendedName>
        <fullName evidence="1">Imidazolonepropionase</fullName>
        <ecNumber evidence="1">3.5.2.7</ecNumber>
    </recommendedName>
    <alternativeName>
        <fullName evidence="1">Imidazolone-5-propionate hydrolase</fullName>
    </alternativeName>
</protein>
<name>HUTI_RHOJR</name>
<keyword id="KW-0963">Cytoplasm</keyword>
<keyword id="KW-0369">Histidine metabolism</keyword>
<keyword id="KW-0378">Hydrolase</keyword>
<keyword id="KW-0408">Iron</keyword>
<keyword id="KW-0479">Metal-binding</keyword>
<keyword id="KW-0862">Zinc</keyword>
<gene>
    <name evidence="1" type="primary">hutI</name>
    <name type="ordered locus">RHA1_ro04641</name>
</gene>
<dbReference type="EC" id="3.5.2.7" evidence="1"/>
<dbReference type="EMBL" id="CP000431">
    <property type="protein sequence ID" value="ABG96427.1"/>
    <property type="molecule type" value="Genomic_DNA"/>
</dbReference>
<dbReference type="RefSeq" id="WP_011596997.1">
    <property type="nucleotide sequence ID" value="NC_008268.1"/>
</dbReference>
<dbReference type="SMR" id="Q0S7Q9"/>
<dbReference type="KEGG" id="rha:RHA1_ro04641"/>
<dbReference type="PATRIC" id="fig|101510.16.peg.4683"/>
<dbReference type="eggNOG" id="COG1228">
    <property type="taxonomic scope" value="Bacteria"/>
</dbReference>
<dbReference type="HOGENOM" id="CLU_041647_1_0_11"/>
<dbReference type="OrthoDB" id="9776455at2"/>
<dbReference type="UniPathway" id="UPA00379">
    <property type="reaction ID" value="UER00551"/>
</dbReference>
<dbReference type="Proteomes" id="UP000008710">
    <property type="component" value="Chromosome"/>
</dbReference>
<dbReference type="GO" id="GO:0005737">
    <property type="term" value="C:cytoplasm"/>
    <property type="evidence" value="ECO:0007669"/>
    <property type="project" value="UniProtKB-SubCell"/>
</dbReference>
<dbReference type="GO" id="GO:0050480">
    <property type="term" value="F:imidazolonepropionase activity"/>
    <property type="evidence" value="ECO:0007669"/>
    <property type="project" value="UniProtKB-UniRule"/>
</dbReference>
<dbReference type="GO" id="GO:0005506">
    <property type="term" value="F:iron ion binding"/>
    <property type="evidence" value="ECO:0007669"/>
    <property type="project" value="UniProtKB-UniRule"/>
</dbReference>
<dbReference type="GO" id="GO:0008270">
    <property type="term" value="F:zinc ion binding"/>
    <property type="evidence" value="ECO:0007669"/>
    <property type="project" value="UniProtKB-UniRule"/>
</dbReference>
<dbReference type="GO" id="GO:0019556">
    <property type="term" value="P:L-histidine catabolic process to glutamate and formamide"/>
    <property type="evidence" value="ECO:0007669"/>
    <property type="project" value="UniProtKB-UniPathway"/>
</dbReference>
<dbReference type="GO" id="GO:0019557">
    <property type="term" value="P:L-histidine catabolic process to glutamate and formate"/>
    <property type="evidence" value="ECO:0007669"/>
    <property type="project" value="UniProtKB-UniPathway"/>
</dbReference>
<dbReference type="Gene3D" id="3.20.20.140">
    <property type="entry name" value="Metal-dependent hydrolases"/>
    <property type="match status" value="1"/>
</dbReference>
<dbReference type="Gene3D" id="2.30.40.10">
    <property type="entry name" value="Urease, subunit C, domain 1"/>
    <property type="match status" value="1"/>
</dbReference>
<dbReference type="HAMAP" id="MF_00372">
    <property type="entry name" value="HutI"/>
    <property type="match status" value="1"/>
</dbReference>
<dbReference type="InterPro" id="IPR006680">
    <property type="entry name" value="Amidohydro-rel"/>
</dbReference>
<dbReference type="InterPro" id="IPR005920">
    <property type="entry name" value="HutI"/>
</dbReference>
<dbReference type="InterPro" id="IPR011059">
    <property type="entry name" value="Metal-dep_hydrolase_composite"/>
</dbReference>
<dbReference type="InterPro" id="IPR032466">
    <property type="entry name" value="Metal_Hydrolase"/>
</dbReference>
<dbReference type="NCBIfam" id="TIGR01224">
    <property type="entry name" value="hutI"/>
    <property type="match status" value="1"/>
</dbReference>
<dbReference type="PANTHER" id="PTHR42752">
    <property type="entry name" value="IMIDAZOLONEPROPIONASE"/>
    <property type="match status" value="1"/>
</dbReference>
<dbReference type="PANTHER" id="PTHR42752:SF1">
    <property type="entry name" value="IMIDAZOLONEPROPIONASE-RELATED"/>
    <property type="match status" value="1"/>
</dbReference>
<dbReference type="Pfam" id="PF01979">
    <property type="entry name" value="Amidohydro_1"/>
    <property type="match status" value="1"/>
</dbReference>
<dbReference type="SUPFAM" id="SSF51338">
    <property type="entry name" value="Composite domain of metallo-dependent hydrolases"/>
    <property type="match status" value="2"/>
</dbReference>
<dbReference type="SUPFAM" id="SSF51556">
    <property type="entry name" value="Metallo-dependent hydrolases"/>
    <property type="match status" value="1"/>
</dbReference>
<evidence type="ECO:0000255" key="1">
    <source>
        <dbReference type="HAMAP-Rule" id="MF_00372"/>
    </source>
</evidence>
<comment type="function">
    <text evidence="1">Catalyzes the hydrolytic cleavage of the carbon-nitrogen bond in imidazolone-5-propanoate to yield N-formimidoyl-L-glutamate. It is the third step in the universal histidine degradation pathway.</text>
</comment>
<comment type="catalytic activity">
    <reaction evidence="1">
        <text>4-imidazolone-5-propanoate + H2O = N-formimidoyl-L-glutamate</text>
        <dbReference type="Rhea" id="RHEA:23660"/>
        <dbReference type="ChEBI" id="CHEBI:15377"/>
        <dbReference type="ChEBI" id="CHEBI:58928"/>
        <dbReference type="ChEBI" id="CHEBI:77893"/>
        <dbReference type="EC" id="3.5.2.7"/>
    </reaction>
</comment>
<comment type="cofactor">
    <cofactor evidence="1">
        <name>Zn(2+)</name>
        <dbReference type="ChEBI" id="CHEBI:29105"/>
    </cofactor>
    <cofactor evidence="1">
        <name>Fe(3+)</name>
        <dbReference type="ChEBI" id="CHEBI:29034"/>
    </cofactor>
    <text evidence="1">Binds 1 zinc or iron ion per subunit.</text>
</comment>
<comment type="pathway">
    <text evidence="1">Amino-acid degradation; L-histidine degradation into L-glutamate; N-formimidoyl-L-glutamate from L-histidine: step 3/3.</text>
</comment>
<comment type="subcellular location">
    <subcellularLocation>
        <location evidence="1">Cytoplasm</location>
    </subcellularLocation>
</comment>
<comment type="similarity">
    <text evidence="1">Belongs to the metallo-dependent hydrolases superfamily. HutI family.</text>
</comment>
<accession>Q0S7Q9</accession>
<feature type="chain" id="PRO_0000306499" description="Imidazolonepropionase">
    <location>
        <begin position="1"/>
        <end position="407"/>
    </location>
</feature>
<feature type="binding site" evidence="1">
    <location>
        <position position="75"/>
    </location>
    <ligand>
        <name>Fe(3+)</name>
        <dbReference type="ChEBI" id="CHEBI:29034"/>
    </ligand>
</feature>
<feature type="binding site" evidence="1">
    <location>
        <position position="75"/>
    </location>
    <ligand>
        <name>Zn(2+)</name>
        <dbReference type="ChEBI" id="CHEBI:29105"/>
    </ligand>
</feature>
<feature type="binding site" evidence="1">
    <location>
        <position position="77"/>
    </location>
    <ligand>
        <name>Fe(3+)</name>
        <dbReference type="ChEBI" id="CHEBI:29034"/>
    </ligand>
</feature>
<feature type="binding site" evidence="1">
    <location>
        <position position="77"/>
    </location>
    <ligand>
        <name>Zn(2+)</name>
        <dbReference type="ChEBI" id="CHEBI:29105"/>
    </ligand>
</feature>
<feature type="binding site" evidence="1">
    <location>
        <position position="84"/>
    </location>
    <ligand>
        <name>4-imidazolone-5-propanoate</name>
        <dbReference type="ChEBI" id="CHEBI:77893"/>
    </ligand>
</feature>
<feature type="binding site" evidence="1">
    <location>
        <position position="142"/>
    </location>
    <ligand>
        <name>4-imidazolone-5-propanoate</name>
        <dbReference type="ChEBI" id="CHEBI:77893"/>
    </ligand>
</feature>
<feature type="binding site" evidence="1">
    <location>
        <position position="142"/>
    </location>
    <ligand>
        <name>N-formimidoyl-L-glutamate</name>
        <dbReference type="ChEBI" id="CHEBI:58928"/>
    </ligand>
</feature>
<feature type="binding site" evidence="1">
    <location>
        <position position="169"/>
    </location>
    <ligand>
        <name>4-imidazolone-5-propanoate</name>
        <dbReference type="ChEBI" id="CHEBI:77893"/>
    </ligand>
</feature>
<feature type="binding site" evidence="1">
    <location>
        <position position="232"/>
    </location>
    <ligand>
        <name>Fe(3+)</name>
        <dbReference type="ChEBI" id="CHEBI:29034"/>
    </ligand>
</feature>
<feature type="binding site" evidence="1">
    <location>
        <position position="232"/>
    </location>
    <ligand>
        <name>Zn(2+)</name>
        <dbReference type="ChEBI" id="CHEBI:29105"/>
    </ligand>
</feature>
<feature type="binding site" evidence="1">
    <location>
        <position position="235"/>
    </location>
    <ligand>
        <name>4-imidazolone-5-propanoate</name>
        <dbReference type="ChEBI" id="CHEBI:77893"/>
    </ligand>
</feature>
<feature type="binding site" evidence="1">
    <location>
        <position position="306"/>
    </location>
    <ligand>
        <name>Fe(3+)</name>
        <dbReference type="ChEBI" id="CHEBI:29034"/>
    </ligand>
</feature>
<feature type="binding site" evidence="1">
    <location>
        <position position="306"/>
    </location>
    <ligand>
        <name>Zn(2+)</name>
        <dbReference type="ChEBI" id="CHEBI:29105"/>
    </ligand>
</feature>
<feature type="binding site" evidence="1">
    <location>
        <position position="308"/>
    </location>
    <ligand>
        <name>N-formimidoyl-L-glutamate</name>
        <dbReference type="ChEBI" id="CHEBI:58928"/>
    </ligand>
</feature>
<feature type="binding site" evidence="1">
    <location>
        <position position="310"/>
    </location>
    <ligand>
        <name>N-formimidoyl-L-glutamate</name>
        <dbReference type="ChEBI" id="CHEBI:58928"/>
    </ligand>
</feature>
<feature type="binding site" evidence="1">
    <location>
        <position position="311"/>
    </location>
    <ligand>
        <name>4-imidazolone-5-propanoate</name>
        <dbReference type="ChEBI" id="CHEBI:77893"/>
    </ligand>
</feature>
<reference key="1">
    <citation type="journal article" date="2006" name="Proc. Natl. Acad. Sci. U.S.A.">
        <title>The complete genome of Rhodococcus sp. RHA1 provides insights into a catabolic powerhouse.</title>
        <authorList>
            <person name="McLeod M.P."/>
            <person name="Warren R.L."/>
            <person name="Hsiao W.W.L."/>
            <person name="Araki N."/>
            <person name="Myhre M."/>
            <person name="Fernandes C."/>
            <person name="Miyazawa D."/>
            <person name="Wong W."/>
            <person name="Lillquist A.L."/>
            <person name="Wang D."/>
            <person name="Dosanjh M."/>
            <person name="Hara H."/>
            <person name="Petrescu A."/>
            <person name="Morin R.D."/>
            <person name="Yang G."/>
            <person name="Stott J.M."/>
            <person name="Schein J.E."/>
            <person name="Shin H."/>
            <person name="Smailus D."/>
            <person name="Siddiqui A.S."/>
            <person name="Marra M.A."/>
            <person name="Jones S.J.M."/>
            <person name="Holt R."/>
            <person name="Brinkman F.S.L."/>
            <person name="Miyauchi K."/>
            <person name="Fukuda M."/>
            <person name="Davies J.E."/>
            <person name="Mohn W.W."/>
            <person name="Eltis L.D."/>
        </authorList>
    </citation>
    <scope>NUCLEOTIDE SEQUENCE [LARGE SCALE GENOMIC DNA]</scope>
    <source>
        <strain>RHA1</strain>
    </source>
</reference>
<sequence>MTANTSRSTVLTGIGTLVTNDPTVGEGPLGLIRDAAVVFDGGVVAWVGSADSAPAGDVGHDLDGRAVLPGFVESHSHLVFGGERAEEFAARMAGQPYAAGGIRNTIEATRNATDEQLQANTRRLLDESLRSGSTTVECKTGYGQTVAHELRSTRIAASLTDEVTLLAAHVPPPEYAGRADDYVAMVCSEMIDACAPQAKWIDVFCETGAFDRDQAHAVLTAGMAKGLIPRVHGNQLREGPGVQLAVELGAASVDHVCYTTQADIDALAQSSTVATLLPGADFSTRNKYPDARALLDAGVTVALGADCNPGTSYTTSLPFCIAIAVRDMHMTPDEAIWAATAGGARALQRADVGVLRPGARADVLALDAPSYLHLAYRPGVPLVSDVWRGGELAWSAHTGHEKARALR</sequence>
<organism>
    <name type="scientific">Rhodococcus jostii (strain RHA1)</name>
    <dbReference type="NCBI Taxonomy" id="101510"/>
    <lineage>
        <taxon>Bacteria</taxon>
        <taxon>Bacillati</taxon>
        <taxon>Actinomycetota</taxon>
        <taxon>Actinomycetes</taxon>
        <taxon>Mycobacteriales</taxon>
        <taxon>Nocardiaceae</taxon>
        <taxon>Rhodococcus</taxon>
    </lineage>
</organism>
<proteinExistence type="inferred from homology"/>